<reference key="1">
    <citation type="submission" date="2001-04" db="EMBL/GenBank/DDBJ databases">
        <title>Identification of mouse gamma-butyrobetaine hydroxylase cDNA.</title>
        <authorList>
            <person name="Vaz F.M."/>
            <person name="Ofman R."/>
            <person name="Wanders R.J.A."/>
        </authorList>
    </citation>
    <scope>NUCLEOTIDE SEQUENCE [MRNA]</scope>
    <source>
        <strain>FVB/N</strain>
    </source>
</reference>
<reference key="2">
    <citation type="journal article" date="2004" name="Genome Res.">
        <title>The status, quality, and expansion of the NIH full-length cDNA project: the Mammalian Gene Collection (MGC).</title>
        <authorList>
            <consortium name="The MGC Project Team"/>
        </authorList>
    </citation>
    <scope>NUCLEOTIDE SEQUENCE [LARGE SCALE MRNA]</scope>
    <source>
        <tissue>Liver</tissue>
    </source>
</reference>
<reference key="3">
    <citation type="journal article" date="2010" name="Cell">
        <title>A tissue-specific atlas of mouse protein phosphorylation and expression.</title>
        <authorList>
            <person name="Huttlin E.L."/>
            <person name="Jedrychowski M.P."/>
            <person name="Elias J.E."/>
            <person name="Goswami T."/>
            <person name="Rad R."/>
            <person name="Beausoleil S.A."/>
            <person name="Villen J."/>
            <person name="Haas W."/>
            <person name="Sowa M.E."/>
            <person name="Gygi S.P."/>
        </authorList>
    </citation>
    <scope>IDENTIFICATION BY MASS SPECTROMETRY [LARGE SCALE ANALYSIS]</scope>
    <source>
        <tissue>Liver</tissue>
    </source>
</reference>
<protein>
    <recommendedName>
        <fullName>Gamma-butyrobetaine dioxygenase</fullName>
        <ecNumber>1.14.11.1</ecNumber>
    </recommendedName>
    <alternativeName>
        <fullName>Gamma-butyrobetaine hydroxylase</fullName>
        <shortName>Gamma-BBH</shortName>
    </alternativeName>
    <alternativeName>
        <fullName>Gamma-butyrobetaine,2-oxoglutarate dioxygenase</fullName>
    </alternativeName>
</protein>
<organism>
    <name type="scientific">Mus musculus</name>
    <name type="common">Mouse</name>
    <dbReference type="NCBI Taxonomy" id="10090"/>
    <lineage>
        <taxon>Eukaryota</taxon>
        <taxon>Metazoa</taxon>
        <taxon>Chordata</taxon>
        <taxon>Craniata</taxon>
        <taxon>Vertebrata</taxon>
        <taxon>Euteleostomi</taxon>
        <taxon>Mammalia</taxon>
        <taxon>Eutheria</taxon>
        <taxon>Euarchontoglires</taxon>
        <taxon>Glires</taxon>
        <taxon>Rodentia</taxon>
        <taxon>Myomorpha</taxon>
        <taxon>Muroidea</taxon>
        <taxon>Muridae</taxon>
        <taxon>Murinae</taxon>
        <taxon>Mus</taxon>
        <taxon>Mus</taxon>
    </lineage>
</organism>
<feature type="chain" id="PRO_0000207086" description="Gamma-butyrobetaine dioxygenase">
    <location>
        <begin position="1"/>
        <end position="387"/>
    </location>
</feature>
<feature type="binding site" evidence="1">
    <location>
        <position position="38"/>
    </location>
    <ligand>
        <name>Zn(2+)</name>
        <dbReference type="ChEBI" id="CHEBI:29105"/>
    </ligand>
</feature>
<feature type="binding site" evidence="1">
    <location>
        <position position="40"/>
    </location>
    <ligand>
        <name>Zn(2+)</name>
        <dbReference type="ChEBI" id="CHEBI:29105"/>
    </ligand>
</feature>
<feature type="binding site" evidence="1">
    <location>
        <position position="43"/>
    </location>
    <ligand>
        <name>Zn(2+)</name>
        <dbReference type="ChEBI" id="CHEBI:29105"/>
    </ligand>
</feature>
<feature type="binding site" evidence="1">
    <location>
        <position position="82"/>
    </location>
    <ligand>
        <name>Zn(2+)</name>
        <dbReference type="ChEBI" id="CHEBI:29105"/>
    </ligand>
</feature>
<feature type="binding site" evidence="1">
    <location>
        <position position="202"/>
    </location>
    <ligand>
        <name>Fe cation</name>
        <dbReference type="ChEBI" id="CHEBI:24875"/>
        <note>catalytic</note>
    </ligand>
</feature>
<feature type="binding site" evidence="1">
    <location>
        <position position="204"/>
    </location>
    <ligand>
        <name>Fe cation</name>
        <dbReference type="ChEBI" id="CHEBI:24875"/>
        <note>catalytic</note>
    </ligand>
</feature>
<feature type="binding site" evidence="1">
    <location>
        <position position="347"/>
    </location>
    <ligand>
        <name>Fe cation</name>
        <dbReference type="ChEBI" id="CHEBI:24875"/>
        <note>catalytic</note>
    </ligand>
</feature>
<feature type="modified residue" description="Phosphoserine" evidence="2">
    <location>
        <position position="351"/>
    </location>
</feature>
<accession>Q924Y0</accession>
<comment type="function">
    <text evidence="1">Catalyzes the formation of L-carnitine from gamma-butyrobetaine.</text>
</comment>
<comment type="catalytic activity">
    <reaction>
        <text>4-(trimethylamino)butanoate + 2-oxoglutarate + O2 = carnitine + succinate + CO2</text>
        <dbReference type="Rhea" id="RHEA:24028"/>
        <dbReference type="ChEBI" id="CHEBI:15379"/>
        <dbReference type="ChEBI" id="CHEBI:16244"/>
        <dbReference type="ChEBI" id="CHEBI:16526"/>
        <dbReference type="ChEBI" id="CHEBI:16810"/>
        <dbReference type="ChEBI" id="CHEBI:17126"/>
        <dbReference type="ChEBI" id="CHEBI:30031"/>
        <dbReference type="EC" id="1.14.11.1"/>
    </reaction>
</comment>
<comment type="cofactor">
    <cofactor evidence="1">
        <name>Fe(2+)</name>
        <dbReference type="ChEBI" id="CHEBI:29033"/>
    </cofactor>
    <text evidence="1">Binds 1 Fe(2+) ion per subunit.</text>
</comment>
<comment type="cofactor">
    <cofactor evidence="1">
        <name>L-ascorbate</name>
        <dbReference type="ChEBI" id="CHEBI:38290"/>
    </cofactor>
</comment>
<comment type="pathway">
    <text>Amine and polyamine biosynthesis; carnitine biosynthesis.</text>
</comment>
<comment type="subcellular location">
    <subcellularLocation>
        <location evidence="1">Cytoplasm</location>
    </subcellularLocation>
</comment>
<comment type="similarity">
    <text evidence="3">Belongs to the gamma-BBH/TMLD family.</text>
</comment>
<sequence length="387" mass="44699">MHCAILKAEAVDGAHLMQIFWHDGAESLYPAVWLRDNCQCSDCYLHSAKARKLLLEALDVNIRIDDLTFDRKKVYITWPNDHYSEFEANWLKKRCFSQQARARLQGELFLPECQYWGSELQLPTLNFEDVLNDDDHAYKWLSSLKKVGIVRLTGAADKRGEIIKLGKRIGFLYLTFYGHTWQVQDKIDANNVAYTTGKLSFHTDYPALHHPPGVQLLHCIKQTVTGGDSEIVDGFNVCQKLKEKNPQAFHILSSTFVDFTDIGVDYCDFSVQSKHKIIELDDKGQVVRVNFNNATRDTVFDVPIERVQPFYAALKEFVDLMNSKEYKYTFKMNPGDVITFDNWRLLHGRRSYEAGTEISRHLEGAYADWDVVMSRLRILRQRVTNGN</sequence>
<evidence type="ECO:0000250" key="1"/>
<evidence type="ECO:0000250" key="2">
    <source>
        <dbReference type="UniProtKB" id="Q9QZU7"/>
    </source>
</evidence>
<evidence type="ECO:0000305" key="3"/>
<gene>
    <name type="primary">Bbox1</name>
</gene>
<dbReference type="EC" id="1.14.11.1"/>
<dbReference type="EMBL" id="AY033514">
    <property type="protein sequence ID" value="AAK54388.1"/>
    <property type="molecule type" value="mRNA"/>
</dbReference>
<dbReference type="EMBL" id="BC019406">
    <property type="protein sequence ID" value="AAH19406.1"/>
    <property type="molecule type" value="mRNA"/>
</dbReference>
<dbReference type="CCDS" id="CCDS16510.1"/>
<dbReference type="RefSeq" id="NP_001400091.1">
    <property type="nucleotide sequence ID" value="NM_001413162.1"/>
</dbReference>
<dbReference type="RefSeq" id="NP_569719.1">
    <property type="nucleotide sequence ID" value="NM_130452.2"/>
</dbReference>
<dbReference type="RefSeq" id="XP_006498885.1">
    <property type="nucleotide sequence ID" value="XM_006498822.3"/>
</dbReference>
<dbReference type="RefSeq" id="XP_006498886.1">
    <property type="nucleotide sequence ID" value="XM_006498823.4"/>
</dbReference>
<dbReference type="SMR" id="Q924Y0"/>
<dbReference type="BioGRID" id="228345">
    <property type="interactions" value="2"/>
</dbReference>
<dbReference type="FunCoup" id="Q924Y0">
    <property type="interactions" value="505"/>
</dbReference>
<dbReference type="STRING" id="10090.ENSMUSP00000046302"/>
<dbReference type="GlyGen" id="Q924Y0">
    <property type="glycosylation" value="1 site, 1 O-linked glycan (1 site)"/>
</dbReference>
<dbReference type="iPTMnet" id="Q924Y0"/>
<dbReference type="PhosphoSitePlus" id="Q924Y0"/>
<dbReference type="SwissPalm" id="Q924Y0"/>
<dbReference type="jPOST" id="Q924Y0"/>
<dbReference type="PaxDb" id="10090-ENSMUSP00000046302"/>
<dbReference type="ProteomicsDB" id="273622"/>
<dbReference type="Antibodypedia" id="2001">
    <property type="antibodies" value="411 antibodies from 30 providers"/>
</dbReference>
<dbReference type="DNASU" id="170442"/>
<dbReference type="Ensembl" id="ENSMUST00000046233.9">
    <property type="protein sequence ID" value="ENSMUSP00000046302.3"/>
    <property type="gene ID" value="ENSMUSG00000041660.9"/>
</dbReference>
<dbReference type="GeneID" id="170442"/>
<dbReference type="KEGG" id="mmu:170442"/>
<dbReference type="UCSC" id="uc008lmu.1">
    <property type="organism name" value="mouse"/>
</dbReference>
<dbReference type="AGR" id="MGI:1891372"/>
<dbReference type="CTD" id="8424"/>
<dbReference type="MGI" id="MGI:1891372">
    <property type="gene designation" value="Bbox1"/>
</dbReference>
<dbReference type="VEuPathDB" id="HostDB:ENSMUSG00000041660"/>
<dbReference type="eggNOG" id="KOG3888">
    <property type="taxonomic scope" value="Eukaryota"/>
</dbReference>
<dbReference type="GeneTree" id="ENSGT00530000063582"/>
<dbReference type="HOGENOM" id="CLU_021859_2_0_1"/>
<dbReference type="InParanoid" id="Q924Y0"/>
<dbReference type="OMA" id="VHITWPN"/>
<dbReference type="OrthoDB" id="406634at2759"/>
<dbReference type="PhylomeDB" id="Q924Y0"/>
<dbReference type="TreeFam" id="TF313805"/>
<dbReference type="Reactome" id="R-MMU-71262">
    <property type="pathway name" value="Carnitine synthesis"/>
</dbReference>
<dbReference type="UniPathway" id="UPA00118"/>
<dbReference type="BioGRID-ORCS" id="170442">
    <property type="hits" value="2 hits in 77 CRISPR screens"/>
</dbReference>
<dbReference type="ChiTaRS" id="Bbox1">
    <property type="organism name" value="mouse"/>
</dbReference>
<dbReference type="PRO" id="PR:Q924Y0"/>
<dbReference type="Proteomes" id="UP000000589">
    <property type="component" value="Chromosome 2"/>
</dbReference>
<dbReference type="RNAct" id="Q924Y0">
    <property type="molecule type" value="protein"/>
</dbReference>
<dbReference type="Bgee" id="ENSMUSG00000041660">
    <property type="expression patterns" value="Expressed in vestibular membrane of cochlear duct and 104 other cell types or tissues"/>
</dbReference>
<dbReference type="ExpressionAtlas" id="Q924Y0">
    <property type="expression patterns" value="baseline and differential"/>
</dbReference>
<dbReference type="GO" id="GO:0005829">
    <property type="term" value="C:cytosol"/>
    <property type="evidence" value="ECO:0000314"/>
    <property type="project" value="MGI"/>
</dbReference>
<dbReference type="GO" id="GO:0005739">
    <property type="term" value="C:mitochondrion"/>
    <property type="evidence" value="ECO:0007005"/>
    <property type="project" value="MGI"/>
</dbReference>
<dbReference type="GO" id="GO:0008336">
    <property type="term" value="F:gamma-butyrobetaine dioxygenase activity"/>
    <property type="evidence" value="ECO:0000314"/>
    <property type="project" value="MGI"/>
</dbReference>
<dbReference type="GO" id="GO:0042802">
    <property type="term" value="F:identical protein binding"/>
    <property type="evidence" value="ECO:0007669"/>
    <property type="project" value="Ensembl"/>
</dbReference>
<dbReference type="GO" id="GO:0005506">
    <property type="term" value="F:iron ion binding"/>
    <property type="evidence" value="ECO:0007669"/>
    <property type="project" value="InterPro"/>
</dbReference>
<dbReference type="GO" id="GO:0008270">
    <property type="term" value="F:zinc ion binding"/>
    <property type="evidence" value="ECO:0000250"/>
    <property type="project" value="UniProtKB"/>
</dbReference>
<dbReference type="GO" id="GO:0045329">
    <property type="term" value="P:carnitine biosynthetic process"/>
    <property type="evidence" value="ECO:0000316"/>
    <property type="project" value="MGI"/>
</dbReference>
<dbReference type="CDD" id="cd00250">
    <property type="entry name" value="CAS_like"/>
    <property type="match status" value="1"/>
</dbReference>
<dbReference type="FunFam" id="3.60.130.10:FF:000015">
    <property type="entry name" value="Gamma-butyrobetaine dioxygenase"/>
    <property type="match status" value="1"/>
</dbReference>
<dbReference type="FunFam" id="3.30.2020.30:FF:000002">
    <property type="entry name" value="Putative gamma-butyrobetaine dioxygenase"/>
    <property type="match status" value="1"/>
</dbReference>
<dbReference type="Gene3D" id="3.30.2020.30">
    <property type="match status" value="1"/>
</dbReference>
<dbReference type="Gene3D" id="3.60.130.10">
    <property type="entry name" value="Clavaminate synthase-like"/>
    <property type="match status" value="1"/>
</dbReference>
<dbReference type="InterPro" id="IPR050411">
    <property type="entry name" value="AlphaKG_dependent_hydroxylases"/>
</dbReference>
<dbReference type="InterPro" id="IPR012775">
    <property type="entry name" value="GBBH-like"/>
</dbReference>
<dbReference type="InterPro" id="IPR010376">
    <property type="entry name" value="GBBH-like_N"/>
</dbReference>
<dbReference type="InterPro" id="IPR038492">
    <property type="entry name" value="GBBH-like_N_sf"/>
</dbReference>
<dbReference type="InterPro" id="IPR042098">
    <property type="entry name" value="TauD-like_sf"/>
</dbReference>
<dbReference type="InterPro" id="IPR003819">
    <property type="entry name" value="TauD/TfdA-like"/>
</dbReference>
<dbReference type="NCBIfam" id="TIGR02409">
    <property type="entry name" value="carnitine_bodg"/>
    <property type="match status" value="1"/>
</dbReference>
<dbReference type="PANTHER" id="PTHR10696:SF33">
    <property type="entry name" value="GAMMA-BUTYROBETAINE DIOXYGENASE"/>
    <property type="match status" value="1"/>
</dbReference>
<dbReference type="PANTHER" id="PTHR10696">
    <property type="entry name" value="GAMMA-BUTYROBETAINE HYDROXYLASE-RELATED"/>
    <property type="match status" value="1"/>
</dbReference>
<dbReference type="Pfam" id="PF06155">
    <property type="entry name" value="GBBH-like_N"/>
    <property type="match status" value="1"/>
</dbReference>
<dbReference type="Pfam" id="PF02668">
    <property type="entry name" value="TauD"/>
    <property type="match status" value="1"/>
</dbReference>
<dbReference type="SUPFAM" id="SSF51197">
    <property type="entry name" value="Clavaminate synthase-like"/>
    <property type="match status" value="1"/>
</dbReference>
<keyword id="KW-0124">Carnitine biosynthesis</keyword>
<keyword id="KW-0963">Cytoplasm</keyword>
<keyword id="KW-0223">Dioxygenase</keyword>
<keyword id="KW-0408">Iron</keyword>
<keyword id="KW-0479">Metal-binding</keyword>
<keyword id="KW-0560">Oxidoreductase</keyword>
<keyword id="KW-0597">Phosphoprotein</keyword>
<keyword id="KW-1185">Reference proteome</keyword>
<keyword id="KW-0862">Zinc</keyword>
<proteinExistence type="evidence at protein level"/>
<name>BODG_MOUSE</name>